<protein>
    <recommendedName>
        <fullName>Putative F-box/kelch-repeat protein At2g41360</fullName>
    </recommendedName>
</protein>
<sequence length="373" mass="42710">MARNVSSWSSLSCLPDEMVLNCLARVPRRYYENISCVSVRLRSLVRTPELYRMRSLLHKDSIYVCFCDRENYSTDATYLWFTLRPTTATMEYQLVPLSFPSHNFMFRASTVAVDSEIYFVGGRPNPTELWILDTRSGKLRQGPIKPEFLRIASSSAVGVFDGKIHVIQDLKQDETEEQVYDLETQTWKVVGVPVPDEKADSRPNMVSSVSLEGKVYAKDFGSISVYNLRQGTRKEKLELPIDDRWVSCMCVANNVLFAFFTKYGLLWLDTKLNNVWRVVTGDVQTLHRKLYGSAMAEYYGKLAIFWRERYISTSINTTKNNNNNNKKKEEKIWSALIALNRVGDGICGTIEWSGVVATIPYICQFLHCLVASD</sequence>
<gene>
    <name type="ordered locus">At2g41360</name>
    <name type="ORF">F13H10.9</name>
</gene>
<reference key="1">
    <citation type="journal article" date="1999" name="Nature">
        <title>Sequence and analysis of chromosome 2 of the plant Arabidopsis thaliana.</title>
        <authorList>
            <person name="Lin X."/>
            <person name="Kaul S."/>
            <person name="Rounsley S.D."/>
            <person name="Shea T.P."/>
            <person name="Benito M.-I."/>
            <person name="Town C.D."/>
            <person name="Fujii C.Y."/>
            <person name="Mason T.M."/>
            <person name="Bowman C.L."/>
            <person name="Barnstead M.E."/>
            <person name="Feldblyum T.V."/>
            <person name="Buell C.R."/>
            <person name="Ketchum K.A."/>
            <person name="Lee J.J."/>
            <person name="Ronning C.M."/>
            <person name="Koo H.L."/>
            <person name="Moffat K.S."/>
            <person name="Cronin L.A."/>
            <person name="Shen M."/>
            <person name="Pai G."/>
            <person name="Van Aken S."/>
            <person name="Umayam L."/>
            <person name="Tallon L.J."/>
            <person name="Gill J.E."/>
            <person name="Adams M.D."/>
            <person name="Carrera A.J."/>
            <person name="Creasy T.H."/>
            <person name="Goodman H.M."/>
            <person name="Somerville C.R."/>
            <person name="Copenhaver G.P."/>
            <person name="Preuss D."/>
            <person name="Nierman W.C."/>
            <person name="White O."/>
            <person name="Eisen J.A."/>
            <person name="Salzberg S.L."/>
            <person name="Fraser C.M."/>
            <person name="Venter J.C."/>
        </authorList>
    </citation>
    <scope>NUCLEOTIDE SEQUENCE [LARGE SCALE GENOMIC DNA]</scope>
    <source>
        <strain>cv. Columbia</strain>
    </source>
</reference>
<reference key="2">
    <citation type="journal article" date="2017" name="Plant J.">
        <title>Araport11: a complete reannotation of the Arabidopsis thaliana reference genome.</title>
        <authorList>
            <person name="Cheng C.Y."/>
            <person name="Krishnakumar V."/>
            <person name="Chan A.P."/>
            <person name="Thibaud-Nissen F."/>
            <person name="Schobel S."/>
            <person name="Town C.D."/>
        </authorList>
    </citation>
    <scope>GENOME REANNOTATION</scope>
    <source>
        <strain>cv. Columbia</strain>
    </source>
</reference>
<organism>
    <name type="scientific">Arabidopsis thaliana</name>
    <name type="common">Mouse-ear cress</name>
    <dbReference type="NCBI Taxonomy" id="3702"/>
    <lineage>
        <taxon>Eukaryota</taxon>
        <taxon>Viridiplantae</taxon>
        <taxon>Streptophyta</taxon>
        <taxon>Embryophyta</taxon>
        <taxon>Tracheophyta</taxon>
        <taxon>Spermatophyta</taxon>
        <taxon>Magnoliopsida</taxon>
        <taxon>eudicotyledons</taxon>
        <taxon>Gunneridae</taxon>
        <taxon>Pentapetalae</taxon>
        <taxon>rosids</taxon>
        <taxon>malvids</taxon>
        <taxon>Brassicales</taxon>
        <taxon>Brassicaceae</taxon>
        <taxon>Camelineae</taxon>
        <taxon>Arabidopsis</taxon>
    </lineage>
</organism>
<accession>Q9ZVC1</accession>
<accession>F4IK03</accession>
<feature type="chain" id="PRO_0000283202" description="Putative F-box/kelch-repeat protein At2g41360">
    <location>
        <begin position="1"/>
        <end position="373"/>
    </location>
</feature>
<feature type="domain" description="F-box">
    <location>
        <begin position="8"/>
        <end position="54"/>
    </location>
</feature>
<feature type="repeat" description="Kelch 1">
    <location>
        <begin position="116"/>
        <end position="162"/>
    </location>
</feature>
<feature type="repeat" description="Kelch 2">
    <location>
        <begin position="163"/>
        <end position="208"/>
    </location>
</feature>
<proteinExistence type="predicted"/>
<keyword id="KW-0880">Kelch repeat</keyword>
<keyword id="KW-1185">Reference proteome</keyword>
<keyword id="KW-0677">Repeat</keyword>
<dbReference type="EMBL" id="AC005662">
    <property type="protein sequence ID" value="AAC78537.1"/>
    <property type="molecule type" value="Genomic_DNA"/>
</dbReference>
<dbReference type="EMBL" id="CP002685">
    <property type="protein sequence ID" value="AEC09965.2"/>
    <property type="molecule type" value="Genomic_DNA"/>
</dbReference>
<dbReference type="PIR" id="G84840">
    <property type="entry name" value="G84840"/>
</dbReference>
<dbReference type="RefSeq" id="NP_001318401.1">
    <property type="nucleotide sequence ID" value="NM_001336904.1"/>
</dbReference>
<dbReference type="SMR" id="Q9ZVC1"/>
<dbReference type="FunCoup" id="Q9ZVC1">
    <property type="interactions" value="22"/>
</dbReference>
<dbReference type="STRING" id="3702.Q9ZVC1"/>
<dbReference type="iPTMnet" id="Q9ZVC1"/>
<dbReference type="PaxDb" id="3702-AT2G41360.1"/>
<dbReference type="EnsemblPlants" id="AT2G41360.1">
    <property type="protein sequence ID" value="AT2G41360.1"/>
    <property type="gene ID" value="AT2G41360"/>
</dbReference>
<dbReference type="GeneID" id="818734"/>
<dbReference type="Gramene" id="AT2G41360.1">
    <property type="protein sequence ID" value="AT2G41360.1"/>
    <property type="gene ID" value="AT2G41360"/>
</dbReference>
<dbReference type="KEGG" id="ath:AT2G41360"/>
<dbReference type="Araport" id="AT2G41360"/>
<dbReference type="TAIR" id="AT2G41360"/>
<dbReference type="eggNOG" id="KOG1072">
    <property type="taxonomic scope" value="Eukaryota"/>
</dbReference>
<dbReference type="HOGENOM" id="CLU_032521_0_0_1"/>
<dbReference type="InParanoid" id="Q9ZVC1"/>
<dbReference type="OMA" id="HAMVEYE"/>
<dbReference type="OrthoDB" id="1077625at2759"/>
<dbReference type="PhylomeDB" id="Q9ZVC1"/>
<dbReference type="PRO" id="PR:Q9ZVC1"/>
<dbReference type="Proteomes" id="UP000006548">
    <property type="component" value="Chromosome 2"/>
</dbReference>
<dbReference type="ExpressionAtlas" id="Q9ZVC1">
    <property type="expression patterns" value="baseline and differential"/>
</dbReference>
<dbReference type="CDD" id="cd22152">
    <property type="entry name" value="F-box_AtAFR-like"/>
    <property type="match status" value="1"/>
</dbReference>
<dbReference type="Gene3D" id="2.120.10.80">
    <property type="entry name" value="Kelch-type beta propeller"/>
    <property type="match status" value="1"/>
</dbReference>
<dbReference type="InterPro" id="IPR036047">
    <property type="entry name" value="F-box-like_dom_sf"/>
</dbReference>
<dbReference type="InterPro" id="IPR050354">
    <property type="entry name" value="F-box/kelch-repeat_ARATH"/>
</dbReference>
<dbReference type="InterPro" id="IPR001810">
    <property type="entry name" value="F-box_dom"/>
</dbReference>
<dbReference type="InterPro" id="IPR015915">
    <property type="entry name" value="Kelch-typ_b-propeller"/>
</dbReference>
<dbReference type="PANTHER" id="PTHR24414:SF143">
    <property type="entry name" value="F-BOX DOMAIN-CONTAINING PROTEIN"/>
    <property type="match status" value="1"/>
</dbReference>
<dbReference type="PANTHER" id="PTHR24414">
    <property type="entry name" value="F-BOX/KELCH-REPEAT PROTEIN SKIP4"/>
    <property type="match status" value="1"/>
</dbReference>
<dbReference type="Pfam" id="PF00646">
    <property type="entry name" value="F-box"/>
    <property type="match status" value="1"/>
</dbReference>
<dbReference type="Pfam" id="PF25210">
    <property type="entry name" value="Kelch_FKB95"/>
    <property type="match status" value="1"/>
</dbReference>
<dbReference type="SUPFAM" id="SSF81383">
    <property type="entry name" value="F-box domain"/>
    <property type="match status" value="1"/>
</dbReference>
<dbReference type="SUPFAM" id="SSF117281">
    <property type="entry name" value="Kelch motif"/>
    <property type="match status" value="1"/>
</dbReference>
<name>FBK42_ARATH</name>